<gene>
    <name evidence="1" type="primary">DFP1</name>
</gene>
<sequence length="240" mass="27571">MQPYLKKNTHATDDPKASPLKEGSPDNPESPLISADIVLPEDEFASYQSYLLYEIVRAKYIMINFLLFVVTILATLTDIWFSGVLSPAMVIRICLGGSMVVLQIWSFSRPISNETFRTKLLLEVITHRPSIAGKEWKTITYNMNQYLFKAGLWKTPYHFFCEHQCYEFFKDLIKGKYPDVQWDTANTQPFISVPENQAATQNSDVEPTVKWCLFKAAEIQAHAVREYWQSQYPDVGIPAI</sequence>
<keyword id="KW-0472">Membrane</keyword>
<keyword id="KW-0812">Transmembrane</keyword>
<keyword id="KW-1133">Transmembrane helix</keyword>
<dbReference type="EMBL" id="AJ585532">
    <property type="protein sequence ID" value="CAE52052.2"/>
    <property type="molecule type" value="Genomic_DNA"/>
</dbReference>
<dbReference type="EMBL" id="AJ585533">
    <property type="protein sequence ID" value="CAE52053.2"/>
    <property type="molecule type" value="Genomic_DNA"/>
</dbReference>
<dbReference type="EMBL" id="AJ585535">
    <property type="protein sequence ID" value="CAE52055.2"/>
    <property type="molecule type" value="Genomic_DNA"/>
</dbReference>
<dbReference type="EMBL" id="AJ585536">
    <property type="status" value="NOT_ANNOTATED_CDS"/>
    <property type="molecule type" value="Genomic_DNA"/>
</dbReference>
<dbReference type="EMBL" id="AJ585537">
    <property type="protein sequence ID" value="CAE52057.2"/>
    <property type="molecule type" value="Genomic_DNA"/>
</dbReference>
<dbReference type="EMBL" id="AJ585538">
    <property type="status" value="NOT_ANNOTATED_CDS"/>
    <property type="molecule type" value="Genomic_DNA"/>
</dbReference>
<dbReference type="EMBL" id="AJ585539">
    <property type="protein sequence ID" value="CAE52059.2"/>
    <property type="molecule type" value="Genomic_DNA"/>
</dbReference>
<dbReference type="EMBL" id="AJ585540">
    <property type="protein sequence ID" value="CAE52060.2"/>
    <property type="molecule type" value="Genomic_DNA"/>
</dbReference>
<dbReference type="EMBL" id="AJ585541">
    <property type="protein sequence ID" value="CAE52061.2"/>
    <property type="molecule type" value="Genomic_DNA"/>
</dbReference>
<dbReference type="EMBL" id="AJ585542">
    <property type="status" value="NOT_ANNOTATED_CDS"/>
    <property type="molecule type" value="Genomic_DNA"/>
</dbReference>
<dbReference type="EMBL" id="AJ585543">
    <property type="status" value="NOT_ANNOTATED_CDS"/>
    <property type="molecule type" value="Genomic_DNA"/>
</dbReference>
<dbReference type="EMBL" id="AJ585544">
    <property type="protein sequence ID" value="CAE52064.2"/>
    <property type="molecule type" value="Genomic_DNA"/>
</dbReference>
<dbReference type="EMBL" id="AJ585545">
    <property type="protein sequence ID" value="CAE52065.2"/>
    <property type="molecule type" value="Genomic_DNA"/>
</dbReference>
<dbReference type="EMBL" id="AJ585546">
    <property type="protein sequence ID" value="CAE52066.2"/>
    <property type="molecule type" value="Genomic_DNA"/>
</dbReference>
<dbReference type="EMBL" id="AJ585547">
    <property type="status" value="NOT_ANNOTATED_CDS"/>
    <property type="molecule type" value="Genomic_DNA"/>
</dbReference>
<dbReference type="EMBL" id="AJ585548">
    <property type="status" value="NOT_ANNOTATED_CDS"/>
    <property type="molecule type" value="Genomic_DNA"/>
</dbReference>
<dbReference type="IntAct" id="P0CI38">
    <property type="interactions" value="3"/>
</dbReference>
<dbReference type="MINT" id="P0CI38"/>
<dbReference type="VEuPathDB" id="FungiDB:YAR023C"/>
<dbReference type="GO" id="GO:0016020">
    <property type="term" value="C:membrane"/>
    <property type="evidence" value="ECO:0007669"/>
    <property type="project" value="UniProtKB-SubCell"/>
</dbReference>
<dbReference type="InterPro" id="IPR001142">
    <property type="entry name" value="DUP/COS"/>
</dbReference>
<dbReference type="Pfam" id="PF00674">
    <property type="entry name" value="DUP"/>
    <property type="match status" value="1"/>
</dbReference>
<evidence type="ECO:0000250" key="1">
    <source>
        <dbReference type="UniProtKB" id="D6VPM8"/>
    </source>
</evidence>
<evidence type="ECO:0000255" key="2"/>
<evidence type="ECO:0000256" key="3">
    <source>
        <dbReference type="SAM" id="MobiDB-lite"/>
    </source>
</evidence>
<evidence type="ECO:0000269" key="4">
    <source>
    </source>
</evidence>
<evidence type="ECO:0000269" key="5">
    <source>
    </source>
</evidence>
<evidence type="ECO:0000305" key="6"/>
<reference key="1">
    <citation type="journal article" date="2004" name="Nucleic Acids Res.">
        <title>Differential evolution of the Saccharomyces cerevisiae DUP240 paralogs and implication of recombination in phylogeny.</title>
        <authorList>
            <person name="Leh-Louis V."/>
            <person name="Wirth B."/>
            <person name="Despons L."/>
            <person name="Wain-Hobson S."/>
            <person name="Potier S."/>
            <person name="Souciet J.-L."/>
        </authorList>
    </citation>
    <scope>NUCLEOTIDE SEQUENCE [GENOMIC DNA]</scope>
    <scope>VARIANTS VAL-11; ILE-18; PHE-67; LEU-70; ASN-78; LEU-81; GLN-92; GLY-99; LEU-100; LEU-106; ASN-119 AND PRO-203</scope>
    <source>
        <strain>CBS 5287 / CLIB 219</strain>
        <strain>CLIB 388</strain>
        <strain>CLIB 410</strain>
        <strain>CLIB 413</strain>
        <strain>CLIB 556</strain>
        <strain>CLIB 630</strain>
        <strain>CLIB 95</strain>
        <strain>Diastaticus / ATCC 13007 / CBS 1782 / CLIB 382 / NBRC 1046 / NRRL Y-2416</strain>
        <strain>K1</strain>
        <strain>R12</strain>
        <strain>R13</strain>
        <strain>Sigma 1278B</strain>
        <strain>YIIc12</strain>
        <strain>YIIc17</strain>
    </source>
</reference>
<reference key="2">
    <citation type="journal article" date="2005" name="Mol. Biol. Evol.">
        <title>Paleogenomics or the search for remnant duplicated copies of the yeast DUP240 gene family in intergenic areas.</title>
        <authorList>
            <person name="Wirth B."/>
            <person name="Louis V.L."/>
            <person name="Potier S."/>
            <person name="Souciet J.-L."/>
            <person name="Despons L."/>
        </authorList>
    </citation>
    <scope>NUCLEOTIDE SEQUENCE [GENOMIC DNA]</scope>
    <scope>REVISION OF GENE MODEL</scope>
</reference>
<reference key="3">
    <citation type="journal article" date="2002" name="Microbiology">
        <title>Functional analysis of the Saccharomyces cerevisiae DUP240 multigene family reveals membrane-associated proteins that are not essential for cell viability.</title>
        <authorList>
            <person name="Poirey R."/>
            <person name="Despons L."/>
            <person name="Leh V."/>
            <person name="Lafuente M.-J."/>
            <person name="Potier S."/>
            <person name="Souciet J.-L."/>
            <person name="Jauniaux J.-C."/>
        </authorList>
    </citation>
    <scope>DISRUPTION PHENOTYPE</scope>
</reference>
<organism>
    <name type="scientific">Saccharomyces cerevisiae</name>
    <name type="common">Baker's yeast</name>
    <dbReference type="NCBI Taxonomy" id="4932"/>
    <lineage>
        <taxon>Eukaryota</taxon>
        <taxon>Fungi</taxon>
        <taxon>Dikarya</taxon>
        <taxon>Ascomycota</taxon>
        <taxon>Saccharomycotina</taxon>
        <taxon>Saccharomycetes</taxon>
        <taxon>Saccharomycetales</taxon>
        <taxon>Saccharomycetaceae</taxon>
        <taxon>Saccharomyces</taxon>
    </lineage>
</organism>
<name>YAJ3_YEASX</name>
<proteinExistence type="inferred from homology"/>
<comment type="subcellular location">
    <subcellularLocation>
        <location evidence="6">Membrane</location>
        <topology evidence="6">Multi-pass membrane protein</topology>
    </subcellularLocation>
</comment>
<comment type="disruption phenotype">
    <text evidence="4">Cells lacking all 10 proteins of the DUP240 multigene family show no obvious alterations in mating, sporulation and cell growth.</text>
</comment>
<comment type="miscellaneous">
    <text>Has been shown to be a pseudogene in S288c, CLIB 95, CLIB 388, R12, YIIc12 and YIIc17, due to a naturally occurring frameshift at position 8 in these strains. The sequence shown is from strain Sigma 1278B, the closest phylogenetic relative of S288c.</text>
</comment>
<comment type="similarity">
    <text evidence="6">Belongs to the DUP/COS family.</text>
</comment>
<accession>P0CI38</accession>
<accession>P39546</accession>
<accession>Q70DI0</accession>
<accession>Q70DI1</accession>
<accession>Q70DI5</accession>
<accession>Q70DI6</accession>
<accession>Q70DI7</accession>
<accession>Q70DI8</accession>
<accession>Q70DJ1</accession>
<accession>Q70DJ2</accession>
<protein>
    <recommendedName>
        <fullName evidence="1">DUP240 protein DFP1</fullName>
    </recommendedName>
</protein>
<feature type="chain" id="PRO_0000207527" description="DUP240 protein DFP1">
    <location>
        <begin position="1"/>
        <end position="240"/>
    </location>
</feature>
<feature type="transmembrane region" description="Helical" evidence="2">
    <location>
        <begin position="61"/>
        <end position="81"/>
    </location>
</feature>
<feature type="transmembrane region" description="Helical" evidence="2">
    <location>
        <begin position="84"/>
        <end position="104"/>
    </location>
</feature>
<feature type="region of interest" description="Disordered" evidence="3">
    <location>
        <begin position="1"/>
        <end position="29"/>
    </location>
</feature>
<feature type="sequence variant" description="In strain: CLIB 219, CLIB 410 and CLIB 413." evidence="5">
    <original>A</original>
    <variation>V</variation>
    <location>
        <position position="11"/>
    </location>
</feature>
<feature type="sequence variant" description="In strain: CLIB 219, CLIB 410 and CLIB 413." evidence="5">
    <original>S</original>
    <variation>I</variation>
    <location>
        <position position="18"/>
    </location>
</feature>
<feature type="sequence variant" description="In strain: CLIB 382, CLIB 556 and CLIB 630." evidence="5">
    <original>L</original>
    <variation>F</variation>
    <location>
        <position position="67"/>
    </location>
</feature>
<feature type="sequence variant" description="In strain: CLIB 382, CLIB 556 and CLIB 630." evidence="5">
    <original>V</original>
    <variation>L</variation>
    <location>
        <position position="70"/>
    </location>
</feature>
<feature type="sequence variant" description="In strain: CLIB 382, CLIB 556 and CLIB 630." evidence="5">
    <original>D</original>
    <variation>N</variation>
    <location>
        <position position="78"/>
    </location>
</feature>
<feature type="sequence variant" description="In strain: CLIB 219, CLIB 382, CLIB 413, CLIB 556 and CLIB 630." evidence="5">
    <original>F</original>
    <variation>L</variation>
    <location>
        <position position="81"/>
    </location>
</feature>
<feature type="sequence variant" description="In strain: CLIB 382, CLIB 556 and CLIB 630." evidence="5">
    <original>R</original>
    <variation>Q</variation>
    <location>
        <position position="92"/>
    </location>
</feature>
<feature type="sequence variant" description="In strain: CLIB 413." evidence="5">
    <original>M</original>
    <variation>G</variation>
    <location>
        <position position="99"/>
    </location>
</feature>
<feature type="sequence variant" description="In strain: CLIB 382, CLIB 413, CLIB 556 and CLIB 630." evidence="5">
    <original>V</original>
    <variation>L</variation>
    <location>
        <position position="100"/>
    </location>
</feature>
<feature type="sequence variant" description="In strain: CLIB 382, CLIB 556 and CLIB 630." evidence="5">
    <original>S</original>
    <variation>L</variation>
    <location>
        <position position="106"/>
    </location>
</feature>
<feature type="sequence variant" description="In strain: CLIB 382 haplotype Ha2." evidence="5">
    <original>K</original>
    <variation>N</variation>
    <location>
        <position position="119"/>
    </location>
</feature>
<feature type="sequence variant" description="In strain: CLIB 382, CLIB 556, CLIB 630, K1 and R13 haplotype Ha2." evidence="5">
    <original>S</original>
    <variation>P</variation>
    <location>
        <position position="203"/>
    </location>
</feature>